<dbReference type="EC" id="2.8.1.13" evidence="1"/>
<dbReference type="EMBL" id="AP008937">
    <property type="protein sequence ID" value="BAG26924.1"/>
    <property type="molecule type" value="Genomic_DNA"/>
</dbReference>
<dbReference type="RefSeq" id="WP_012391004.1">
    <property type="nucleotide sequence ID" value="NC_010610.1"/>
</dbReference>
<dbReference type="SMR" id="B2GB92"/>
<dbReference type="GeneID" id="83715078"/>
<dbReference type="KEGG" id="lfe:LAF_0588"/>
<dbReference type="eggNOG" id="COG0482">
    <property type="taxonomic scope" value="Bacteria"/>
</dbReference>
<dbReference type="HOGENOM" id="CLU_035188_1_0_9"/>
<dbReference type="Proteomes" id="UP000001697">
    <property type="component" value="Chromosome"/>
</dbReference>
<dbReference type="GO" id="GO:0005737">
    <property type="term" value="C:cytoplasm"/>
    <property type="evidence" value="ECO:0007669"/>
    <property type="project" value="UniProtKB-SubCell"/>
</dbReference>
<dbReference type="GO" id="GO:0005524">
    <property type="term" value="F:ATP binding"/>
    <property type="evidence" value="ECO:0007669"/>
    <property type="project" value="UniProtKB-KW"/>
</dbReference>
<dbReference type="GO" id="GO:0000049">
    <property type="term" value="F:tRNA binding"/>
    <property type="evidence" value="ECO:0007669"/>
    <property type="project" value="UniProtKB-KW"/>
</dbReference>
<dbReference type="GO" id="GO:0103016">
    <property type="term" value="F:tRNA-uridine 2-sulfurtransferase activity"/>
    <property type="evidence" value="ECO:0007669"/>
    <property type="project" value="UniProtKB-EC"/>
</dbReference>
<dbReference type="GO" id="GO:0002143">
    <property type="term" value="P:tRNA wobble position uridine thiolation"/>
    <property type="evidence" value="ECO:0007669"/>
    <property type="project" value="TreeGrafter"/>
</dbReference>
<dbReference type="CDD" id="cd01998">
    <property type="entry name" value="MnmA_TRMU-like"/>
    <property type="match status" value="1"/>
</dbReference>
<dbReference type="FunFam" id="2.30.30.280:FF:000001">
    <property type="entry name" value="tRNA-specific 2-thiouridylase MnmA"/>
    <property type="match status" value="1"/>
</dbReference>
<dbReference type="FunFam" id="2.40.30.10:FF:000023">
    <property type="entry name" value="tRNA-specific 2-thiouridylase MnmA"/>
    <property type="match status" value="1"/>
</dbReference>
<dbReference type="FunFam" id="3.40.50.620:FF:000004">
    <property type="entry name" value="tRNA-specific 2-thiouridylase MnmA"/>
    <property type="match status" value="1"/>
</dbReference>
<dbReference type="Gene3D" id="2.30.30.280">
    <property type="entry name" value="Adenine nucleotide alpha hydrolases-like domains"/>
    <property type="match status" value="1"/>
</dbReference>
<dbReference type="Gene3D" id="3.40.50.620">
    <property type="entry name" value="HUPs"/>
    <property type="match status" value="1"/>
</dbReference>
<dbReference type="Gene3D" id="2.40.30.10">
    <property type="entry name" value="Translation factors"/>
    <property type="match status" value="1"/>
</dbReference>
<dbReference type="HAMAP" id="MF_00144">
    <property type="entry name" value="tRNA_thiouridyl_MnmA"/>
    <property type="match status" value="1"/>
</dbReference>
<dbReference type="InterPro" id="IPR004506">
    <property type="entry name" value="MnmA-like"/>
</dbReference>
<dbReference type="InterPro" id="IPR046885">
    <property type="entry name" value="MnmA-like_C"/>
</dbReference>
<dbReference type="InterPro" id="IPR046884">
    <property type="entry name" value="MnmA-like_central"/>
</dbReference>
<dbReference type="InterPro" id="IPR023382">
    <property type="entry name" value="MnmA-like_central_sf"/>
</dbReference>
<dbReference type="InterPro" id="IPR014729">
    <property type="entry name" value="Rossmann-like_a/b/a_fold"/>
</dbReference>
<dbReference type="NCBIfam" id="NF001138">
    <property type="entry name" value="PRK00143.1"/>
    <property type="match status" value="1"/>
</dbReference>
<dbReference type="NCBIfam" id="TIGR00420">
    <property type="entry name" value="trmU"/>
    <property type="match status" value="1"/>
</dbReference>
<dbReference type="PANTHER" id="PTHR11933:SF5">
    <property type="entry name" value="MITOCHONDRIAL TRNA-SPECIFIC 2-THIOURIDYLASE 1"/>
    <property type="match status" value="1"/>
</dbReference>
<dbReference type="PANTHER" id="PTHR11933">
    <property type="entry name" value="TRNA 5-METHYLAMINOMETHYL-2-THIOURIDYLATE -METHYLTRANSFERASE"/>
    <property type="match status" value="1"/>
</dbReference>
<dbReference type="Pfam" id="PF03054">
    <property type="entry name" value="tRNA_Me_trans"/>
    <property type="match status" value="1"/>
</dbReference>
<dbReference type="Pfam" id="PF20258">
    <property type="entry name" value="tRNA_Me_trans_C"/>
    <property type="match status" value="1"/>
</dbReference>
<dbReference type="Pfam" id="PF20259">
    <property type="entry name" value="tRNA_Me_trans_M"/>
    <property type="match status" value="1"/>
</dbReference>
<dbReference type="SUPFAM" id="SSF52402">
    <property type="entry name" value="Adenine nucleotide alpha hydrolases-like"/>
    <property type="match status" value="1"/>
</dbReference>
<protein>
    <recommendedName>
        <fullName evidence="1">tRNA-specific 2-thiouridylase MnmA</fullName>
        <ecNumber evidence="1">2.8.1.13</ecNumber>
    </recommendedName>
</protein>
<keyword id="KW-0067">ATP-binding</keyword>
<keyword id="KW-0963">Cytoplasm</keyword>
<keyword id="KW-1015">Disulfide bond</keyword>
<keyword id="KW-0547">Nucleotide-binding</keyword>
<keyword id="KW-1185">Reference proteome</keyword>
<keyword id="KW-0694">RNA-binding</keyword>
<keyword id="KW-0808">Transferase</keyword>
<keyword id="KW-0819">tRNA processing</keyword>
<keyword id="KW-0820">tRNA-binding</keyword>
<proteinExistence type="inferred from homology"/>
<gene>
    <name evidence="1" type="primary">mnmA</name>
    <name type="ordered locus">LAF_0588</name>
</gene>
<organism>
    <name type="scientific">Limosilactobacillus fermentum (strain NBRC 3956 / LMG 18251)</name>
    <name type="common">Lactobacillus fermentum</name>
    <dbReference type="NCBI Taxonomy" id="334390"/>
    <lineage>
        <taxon>Bacteria</taxon>
        <taxon>Bacillati</taxon>
        <taxon>Bacillota</taxon>
        <taxon>Bacilli</taxon>
        <taxon>Lactobacillales</taxon>
        <taxon>Lactobacillaceae</taxon>
        <taxon>Limosilactobacillus</taxon>
    </lineage>
</organism>
<reference key="1">
    <citation type="journal article" date="2008" name="DNA Res.">
        <title>Comparative genome analysis of Lactobacillus reuteri and Lactobacillus fermentum reveal a genomic island for reuterin and cobalamin production.</title>
        <authorList>
            <person name="Morita H."/>
            <person name="Toh H."/>
            <person name="Fukuda S."/>
            <person name="Horikawa H."/>
            <person name="Oshima K."/>
            <person name="Suzuki T."/>
            <person name="Murakami M."/>
            <person name="Hisamatsu S."/>
            <person name="Kato Y."/>
            <person name="Takizawa T."/>
            <person name="Fukuoka H."/>
            <person name="Yoshimura T."/>
            <person name="Itoh K."/>
            <person name="O'Sullivan D.J."/>
            <person name="McKay L.L."/>
            <person name="Ohno H."/>
            <person name="Kikuchi J."/>
            <person name="Masaoka T."/>
            <person name="Hattori M."/>
        </authorList>
    </citation>
    <scope>NUCLEOTIDE SEQUENCE [LARGE SCALE GENOMIC DNA]</scope>
    <source>
        <strain>NBRC 3956 / LMG 18251</strain>
    </source>
</reference>
<feature type="chain" id="PRO_1000096295" description="tRNA-specific 2-thiouridylase MnmA">
    <location>
        <begin position="1"/>
        <end position="377"/>
    </location>
</feature>
<feature type="region of interest" description="Interaction with target base in tRNA" evidence="1">
    <location>
        <begin position="98"/>
        <end position="100"/>
    </location>
</feature>
<feature type="region of interest" description="Interaction with tRNA" evidence="1">
    <location>
        <begin position="150"/>
        <end position="152"/>
    </location>
</feature>
<feature type="region of interest" description="Interaction with tRNA" evidence="1">
    <location>
        <begin position="314"/>
        <end position="315"/>
    </location>
</feature>
<feature type="active site" description="Nucleophile" evidence="1">
    <location>
        <position position="103"/>
    </location>
</feature>
<feature type="active site" description="Cysteine persulfide intermediate" evidence="1">
    <location>
        <position position="200"/>
    </location>
</feature>
<feature type="binding site" evidence="1">
    <location>
        <begin position="12"/>
        <end position="19"/>
    </location>
    <ligand>
        <name>ATP</name>
        <dbReference type="ChEBI" id="CHEBI:30616"/>
    </ligand>
</feature>
<feature type="binding site" evidence="1">
    <location>
        <position position="38"/>
    </location>
    <ligand>
        <name>ATP</name>
        <dbReference type="ChEBI" id="CHEBI:30616"/>
    </ligand>
</feature>
<feature type="binding site" evidence="1">
    <location>
        <position position="127"/>
    </location>
    <ligand>
        <name>ATP</name>
        <dbReference type="ChEBI" id="CHEBI:30616"/>
    </ligand>
</feature>
<feature type="site" description="Interaction with tRNA" evidence="1">
    <location>
        <position position="128"/>
    </location>
</feature>
<feature type="site" description="Interaction with tRNA" evidence="1">
    <location>
        <position position="348"/>
    </location>
</feature>
<feature type="disulfide bond" description="Alternate" evidence="1">
    <location>
        <begin position="103"/>
        <end position="200"/>
    </location>
</feature>
<name>MNMA_LIMF3</name>
<accession>B2GB92</accession>
<comment type="function">
    <text evidence="1">Catalyzes the 2-thiolation of uridine at the wobble position (U34) of tRNA, leading to the formation of s(2)U34.</text>
</comment>
<comment type="catalytic activity">
    <reaction evidence="1">
        <text>S-sulfanyl-L-cysteinyl-[protein] + uridine(34) in tRNA + AH2 + ATP = 2-thiouridine(34) in tRNA + L-cysteinyl-[protein] + A + AMP + diphosphate + H(+)</text>
        <dbReference type="Rhea" id="RHEA:47032"/>
        <dbReference type="Rhea" id="RHEA-COMP:10131"/>
        <dbReference type="Rhea" id="RHEA-COMP:11726"/>
        <dbReference type="Rhea" id="RHEA-COMP:11727"/>
        <dbReference type="Rhea" id="RHEA-COMP:11728"/>
        <dbReference type="ChEBI" id="CHEBI:13193"/>
        <dbReference type="ChEBI" id="CHEBI:15378"/>
        <dbReference type="ChEBI" id="CHEBI:17499"/>
        <dbReference type="ChEBI" id="CHEBI:29950"/>
        <dbReference type="ChEBI" id="CHEBI:30616"/>
        <dbReference type="ChEBI" id="CHEBI:33019"/>
        <dbReference type="ChEBI" id="CHEBI:61963"/>
        <dbReference type="ChEBI" id="CHEBI:65315"/>
        <dbReference type="ChEBI" id="CHEBI:87170"/>
        <dbReference type="ChEBI" id="CHEBI:456215"/>
        <dbReference type="EC" id="2.8.1.13"/>
    </reaction>
</comment>
<comment type="subcellular location">
    <subcellularLocation>
        <location evidence="1">Cytoplasm</location>
    </subcellularLocation>
</comment>
<comment type="similarity">
    <text evidence="1">Belongs to the MnmA/TRMU family.</text>
</comment>
<sequence length="377" mass="42446">MTDNSHTRVVVGMSGGVDSSVTALLLKQQGYDVVGVFMKNWDDTDENGVCTATEDYKDVAKVATQIGIPYYSVNFEKEYWDRVFTYFIDEFKKGRTPNPDVICNKEIKFKAFIEYANQLGADYVATGHYADLKRDEAGNMHLMRAKDQTKDQTYFLSQLDHAQLDKVLFPLAGYTKKEVRQLAKDAGLVVADKKDSVGICFIGEDGHFREFLSQYLPAQQGEMQTVDGKVVGTHAGLMYYTIGQRKGLGLGGTKENNDPWFVIGKDITKNVLYVGQGYENEHLYATHMEASDIHWVDDVVSRYGMEFHCTAKFRYRQKDEGVTVKLSDDGQMVTVTSDDPARAITPGQAVVFYDGDECLGSAIIDRAYNQERQLQYV</sequence>
<evidence type="ECO:0000255" key="1">
    <source>
        <dbReference type="HAMAP-Rule" id="MF_00144"/>
    </source>
</evidence>